<name>F13B_HUMAN</name>
<accession>P05160</accession>
<accession>A8K3E5</accession>
<accession>Q5VYL5</accession>
<reference key="1">
    <citation type="journal article" date="1990" name="Biochemistry">
        <title>Nucleotide sequence of the gene for the b subunit of human factor XIII.</title>
        <authorList>
            <person name="Bottenus R.E."/>
            <person name="Ichinose A."/>
            <person name="Davie E.W."/>
        </authorList>
    </citation>
    <scope>NUCLEOTIDE SEQUENCE [GENOMIC DNA]</scope>
    <scope>VARIANT HIS-115</scope>
</reference>
<reference key="2">
    <citation type="journal article" date="1986" name="Biochemistry">
        <title>Amino acid sequence of the b subunit of human factor XIII, a protein composed of ten repetitive segments.</title>
        <authorList>
            <person name="Ichinose A."/>
            <person name="McMullen B.A."/>
            <person name="Fujikawa K."/>
            <person name="Davie E.W."/>
        </authorList>
    </citation>
    <scope>NUCLEOTIDE SEQUENCE [MRNA] OF 2-661</scope>
    <scope>PROTEIN SEQUENCE OF N-TERMINUS</scope>
    <scope>VARIANT HIS-115</scope>
</reference>
<reference key="3">
    <citation type="submission" date="1987-02" db="EMBL/GenBank/DDBJ databases">
        <authorList>
            <person name="Ichinose A."/>
        </authorList>
    </citation>
    <scope>SEQUENCE REVISION</scope>
</reference>
<reference key="4">
    <citation type="journal article" date="2004" name="Nat. Genet.">
        <title>Complete sequencing and characterization of 21,243 full-length human cDNAs.</title>
        <authorList>
            <person name="Ota T."/>
            <person name="Suzuki Y."/>
            <person name="Nishikawa T."/>
            <person name="Otsuki T."/>
            <person name="Sugiyama T."/>
            <person name="Irie R."/>
            <person name="Wakamatsu A."/>
            <person name="Hayashi K."/>
            <person name="Sato H."/>
            <person name="Nagai K."/>
            <person name="Kimura K."/>
            <person name="Makita H."/>
            <person name="Sekine M."/>
            <person name="Obayashi M."/>
            <person name="Nishi T."/>
            <person name="Shibahara T."/>
            <person name="Tanaka T."/>
            <person name="Ishii S."/>
            <person name="Yamamoto J."/>
            <person name="Saito K."/>
            <person name="Kawai Y."/>
            <person name="Isono Y."/>
            <person name="Nakamura Y."/>
            <person name="Nagahari K."/>
            <person name="Murakami K."/>
            <person name="Yasuda T."/>
            <person name="Iwayanagi T."/>
            <person name="Wagatsuma M."/>
            <person name="Shiratori A."/>
            <person name="Sudo H."/>
            <person name="Hosoiri T."/>
            <person name="Kaku Y."/>
            <person name="Kodaira H."/>
            <person name="Kondo H."/>
            <person name="Sugawara M."/>
            <person name="Takahashi M."/>
            <person name="Kanda K."/>
            <person name="Yokoi T."/>
            <person name="Furuya T."/>
            <person name="Kikkawa E."/>
            <person name="Omura Y."/>
            <person name="Abe K."/>
            <person name="Kamihara K."/>
            <person name="Katsuta N."/>
            <person name="Sato K."/>
            <person name="Tanikawa M."/>
            <person name="Yamazaki M."/>
            <person name="Ninomiya K."/>
            <person name="Ishibashi T."/>
            <person name="Yamashita H."/>
            <person name="Murakawa K."/>
            <person name="Fujimori K."/>
            <person name="Tanai H."/>
            <person name="Kimata M."/>
            <person name="Watanabe M."/>
            <person name="Hiraoka S."/>
            <person name="Chiba Y."/>
            <person name="Ishida S."/>
            <person name="Ono Y."/>
            <person name="Takiguchi S."/>
            <person name="Watanabe S."/>
            <person name="Yosida M."/>
            <person name="Hotuta T."/>
            <person name="Kusano J."/>
            <person name="Kanehori K."/>
            <person name="Takahashi-Fujii A."/>
            <person name="Hara H."/>
            <person name="Tanase T.-O."/>
            <person name="Nomura Y."/>
            <person name="Togiya S."/>
            <person name="Komai F."/>
            <person name="Hara R."/>
            <person name="Takeuchi K."/>
            <person name="Arita M."/>
            <person name="Imose N."/>
            <person name="Musashino K."/>
            <person name="Yuuki H."/>
            <person name="Oshima A."/>
            <person name="Sasaki N."/>
            <person name="Aotsuka S."/>
            <person name="Yoshikawa Y."/>
            <person name="Matsunawa H."/>
            <person name="Ichihara T."/>
            <person name="Shiohata N."/>
            <person name="Sano S."/>
            <person name="Moriya S."/>
            <person name="Momiyama H."/>
            <person name="Satoh N."/>
            <person name="Takami S."/>
            <person name="Terashima Y."/>
            <person name="Suzuki O."/>
            <person name="Nakagawa S."/>
            <person name="Senoh A."/>
            <person name="Mizoguchi H."/>
            <person name="Goto Y."/>
            <person name="Shimizu F."/>
            <person name="Wakebe H."/>
            <person name="Hishigaki H."/>
            <person name="Watanabe T."/>
            <person name="Sugiyama A."/>
            <person name="Takemoto M."/>
            <person name="Kawakami B."/>
            <person name="Yamazaki M."/>
            <person name="Watanabe K."/>
            <person name="Kumagai A."/>
            <person name="Itakura S."/>
            <person name="Fukuzumi Y."/>
            <person name="Fujimori Y."/>
            <person name="Komiyama M."/>
            <person name="Tashiro H."/>
            <person name="Tanigami A."/>
            <person name="Fujiwara T."/>
            <person name="Ono T."/>
            <person name="Yamada K."/>
            <person name="Fujii Y."/>
            <person name="Ozaki K."/>
            <person name="Hirao M."/>
            <person name="Ohmori Y."/>
            <person name="Kawabata A."/>
            <person name="Hikiji T."/>
            <person name="Kobatake N."/>
            <person name="Inagaki H."/>
            <person name="Ikema Y."/>
            <person name="Okamoto S."/>
            <person name="Okitani R."/>
            <person name="Kawakami T."/>
            <person name="Noguchi S."/>
            <person name="Itoh T."/>
            <person name="Shigeta K."/>
            <person name="Senba T."/>
            <person name="Matsumura K."/>
            <person name="Nakajima Y."/>
            <person name="Mizuno T."/>
            <person name="Morinaga M."/>
            <person name="Sasaki M."/>
            <person name="Togashi T."/>
            <person name="Oyama M."/>
            <person name="Hata H."/>
            <person name="Watanabe M."/>
            <person name="Komatsu T."/>
            <person name="Mizushima-Sugano J."/>
            <person name="Satoh T."/>
            <person name="Shirai Y."/>
            <person name="Takahashi Y."/>
            <person name="Nakagawa K."/>
            <person name="Okumura K."/>
            <person name="Nagase T."/>
            <person name="Nomura N."/>
            <person name="Kikuchi H."/>
            <person name="Masuho Y."/>
            <person name="Yamashita R."/>
            <person name="Nakai K."/>
            <person name="Yada T."/>
            <person name="Nakamura Y."/>
            <person name="Ohara O."/>
            <person name="Isogai T."/>
            <person name="Sugano S."/>
        </authorList>
    </citation>
    <scope>NUCLEOTIDE SEQUENCE [LARGE SCALE MRNA]</scope>
    <scope>VARIANT GLU-569</scope>
    <source>
        <tissue>Heart</tissue>
    </source>
</reference>
<reference key="5">
    <citation type="submission" date="2004-07" db="EMBL/GenBank/DDBJ databases">
        <authorList>
            <consortium name="SeattleSNPs variation discovery resource"/>
        </authorList>
    </citation>
    <scope>NUCLEOTIDE SEQUENCE [GENOMIC DNA]</scope>
    <scope>VARIANTS HIS-115; THR-342; ARG-350; PRO-529 AND GLU-569</scope>
</reference>
<reference key="6">
    <citation type="journal article" date="2006" name="Nature">
        <title>The DNA sequence and biological annotation of human chromosome 1.</title>
        <authorList>
            <person name="Gregory S.G."/>
            <person name="Barlow K.F."/>
            <person name="McLay K.E."/>
            <person name="Kaul R."/>
            <person name="Swarbreck D."/>
            <person name="Dunham A."/>
            <person name="Scott C.E."/>
            <person name="Howe K.L."/>
            <person name="Woodfine K."/>
            <person name="Spencer C.C.A."/>
            <person name="Jones M.C."/>
            <person name="Gillson C."/>
            <person name="Searle S."/>
            <person name="Zhou Y."/>
            <person name="Kokocinski F."/>
            <person name="McDonald L."/>
            <person name="Evans R."/>
            <person name="Phillips K."/>
            <person name="Atkinson A."/>
            <person name="Cooper R."/>
            <person name="Jones C."/>
            <person name="Hall R.E."/>
            <person name="Andrews T.D."/>
            <person name="Lloyd C."/>
            <person name="Ainscough R."/>
            <person name="Almeida J.P."/>
            <person name="Ambrose K.D."/>
            <person name="Anderson F."/>
            <person name="Andrew R.W."/>
            <person name="Ashwell R.I.S."/>
            <person name="Aubin K."/>
            <person name="Babbage A.K."/>
            <person name="Bagguley C.L."/>
            <person name="Bailey J."/>
            <person name="Beasley H."/>
            <person name="Bethel G."/>
            <person name="Bird C.P."/>
            <person name="Bray-Allen S."/>
            <person name="Brown J.Y."/>
            <person name="Brown A.J."/>
            <person name="Buckley D."/>
            <person name="Burton J."/>
            <person name="Bye J."/>
            <person name="Carder C."/>
            <person name="Chapman J.C."/>
            <person name="Clark S.Y."/>
            <person name="Clarke G."/>
            <person name="Clee C."/>
            <person name="Cobley V."/>
            <person name="Collier R.E."/>
            <person name="Corby N."/>
            <person name="Coville G.J."/>
            <person name="Davies J."/>
            <person name="Deadman R."/>
            <person name="Dunn M."/>
            <person name="Earthrowl M."/>
            <person name="Ellington A.G."/>
            <person name="Errington H."/>
            <person name="Frankish A."/>
            <person name="Frankland J."/>
            <person name="French L."/>
            <person name="Garner P."/>
            <person name="Garnett J."/>
            <person name="Gay L."/>
            <person name="Ghori M.R.J."/>
            <person name="Gibson R."/>
            <person name="Gilby L.M."/>
            <person name="Gillett W."/>
            <person name="Glithero R.J."/>
            <person name="Grafham D.V."/>
            <person name="Griffiths C."/>
            <person name="Griffiths-Jones S."/>
            <person name="Grocock R."/>
            <person name="Hammond S."/>
            <person name="Harrison E.S.I."/>
            <person name="Hart E."/>
            <person name="Haugen E."/>
            <person name="Heath P.D."/>
            <person name="Holmes S."/>
            <person name="Holt K."/>
            <person name="Howden P.J."/>
            <person name="Hunt A.R."/>
            <person name="Hunt S.E."/>
            <person name="Hunter G."/>
            <person name="Isherwood J."/>
            <person name="James R."/>
            <person name="Johnson C."/>
            <person name="Johnson D."/>
            <person name="Joy A."/>
            <person name="Kay M."/>
            <person name="Kershaw J.K."/>
            <person name="Kibukawa M."/>
            <person name="Kimberley A.M."/>
            <person name="King A."/>
            <person name="Knights A.J."/>
            <person name="Lad H."/>
            <person name="Laird G."/>
            <person name="Lawlor S."/>
            <person name="Leongamornlert D.A."/>
            <person name="Lloyd D.M."/>
            <person name="Loveland J."/>
            <person name="Lovell J."/>
            <person name="Lush M.J."/>
            <person name="Lyne R."/>
            <person name="Martin S."/>
            <person name="Mashreghi-Mohammadi M."/>
            <person name="Matthews L."/>
            <person name="Matthews N.S.W."/>
            <person name="McLaren S."/>
            <person name="Milne S."/>
            <person name="Mistry S."/>
            <person name="Moore M.J.F."/>
            <person name="Nickerson T."/>
            <person name="O'Dell C.N."/>
            <person name="Oliver K."/>
            <person name="Palmeiri A."/>
            <person name="Palmer S.A."/>
            <person name="Parker A."/>
            <person name="Patel D."/>
            <person name="Pearce A.V."/>
            <person name="Peck A.I."/>
            <person name="Pelan S."/>
            <person name="Phelps K."/>
            <person name="Phillimore B.J."/>
            <person name="Plumb R."/>
            <person name="Rajan J."/>
            <person name="Raymond C."/>
            <person name="Rouse G."/>
            <person name="Saenphimmachak C."/>
            <person name="Sehra H.K."/>
            <person name="Sheridan E."/>
            <person name="Shownkeen R."/>
            <person name="Sims S."/>
            <person name="Skuce C.D."/>
            <person name="Smith M."/>
            <person name="Steward C."/>
            <person name="Subramanian S."/>
            <person name="Sycamore N."/>
            <person name="Tracey A."/>
            <person name="Tromans A."/>
            <person name="Van Helmond Z."/>
            <person name="Wall M."/>
            <person name="Wallis J.M."/>
            <person name="White S."/>
            <person name="Whitehead S.L."/>
            <person name="Wilkinson J.E."/>
            <person name="Willey D.L."/>
            <person name="Williams H."/>
            <person name="Wilming L."/>
            <person name="Wray P.W."/>
            <person name="Wu Z."/>
            <person name="Coulson A."/>
            <person name="Vaudin M."/>
            <person name="Sulston J.E."/>
            <person name="Durbin R.M."/>
            <person name="Hubbard T."/>
            <person name="Wooster R."/>
            <person name="Dunham I."/>
            <person name="Carter N.P."/>
            <person name="McVean G."/>
            <person name="Ross M.T."/>
            <person name="Harrow J."/>
            <person name="Olson M.V."/>
            <person name="Beck S."/>
            <person name="Rogers J."/>
            <person name="Bentley D.R."/>
        </authorList>
    </citation>
    <scope>NUCLEOTIDE SEQUENCE [LARGE SCALE GENOMIC DNA]</scope>
</reference>
<reference key="7">
    <citation type="journal article" date="1990" name="Nucleic Acids Res.">
        <title>Complete cDNA sequence encoding the B subunit of human factor XIII.</title>
        <authorList>
            <person name="Grundmann U."/>
            <person name="Nerlich C."/>
            <person name="Rein T."/>
            <person name="Zettlmeissl G."/>
        </authorList>
    </citation>
    <scope>NUCLEOTIDE SEQUENCE [MRNA] OF 1-20</scope>
    <source>
        <tissue>Liver</tissue>
    </source>
</reference>
<reference key="8">
    <citation type="journal article" date="1973" name="J. Biol. Chem.">
        <title>Human Factor XIII from plasma and platelets. Molecular weights, subunit structures, proteolytic activation, and cross-linking of fibrinogen and fibrin.</title>
        <authorList>
            <person name="Schwartz M.L."/>
            <person name="Pizzo S.V."/>
            <person name="Hill R.L."/>
            <person name="McKee P.A."/>
        </authorList>
    </citation>
    <scope>SUBCELLULAR LOCATION</scope>
    <scope>SUBUNIT</scope>
</reference>
<reference key="9">
    <citation type="journal article" date="2001" name="Blood">
        <title>Truncated mutant B subunit for factor XIII causes its deficiency due to impaired intracellular transportation.</title>
        <authorList>
            <person name="Koseki S."/>
            <person name="Souri M."/>
            <person name="Koga S."/>
            <person name="Yamakawa M."/>
            <person name="Shichishima T."/>
            <person name="Maruyama Y."/>
            <person name="Yanai F."/>
            <person name="Ichinose A."/>
        </authorList>
    </citation>
    <scope>INVOLVEMENT IN FA13BD</scope>
</reference>
<reference key="10">
    <citation type="journal article" date="2005" name="J. Proteome Res.">
        <title>Human plasma N-glycoproteome analysis by immunoaffinity subtraction, hydrazide chemistry, and mass spectrometry.</title>
        <authorList>
            <person name="Liu T."/>
            <person name="Qian W.-J."/>
            <person name="Gritsenko M.A."/>
            <person name="Camp D.G. II"/>
            <person name="Monroe M.E."/>
            <person name="Moore R.J."/>
            <person name="Smith R.D."/>
        </authorList>
    </citation>
    <scope>GLYCOSYLATION [LARGE SCALE ANALYSIS] AT ASN-545</scope>
    <source>
        <tissue>Plasma</tissue>
    </source>
</reference>
<reference key="11">
    <citation type="journal article" date="2009" name="J. Proteome Res.">
        <title>Glycoproteomics analysis of human liver tissue by combination of multiple enzyme digestion and hydrazide chemistry.</title>
        <authorList>
            <person name="Chen R."/>
            <person name="Jiang X."/>
            <person name="Sun D."/>
            <person name="Han G."/>
            <person name="Wang F."/>
            <person name="Ye M."/>
            <person name="Wang L."/>
            <person name="Zou H."/>
        </authorList>
    </citation>
    <scope>GLYCOSYLATION [LARGE SCALE ANALYSIS] AT ASN-162</scope>
    <source>
        <tissue>Liver</tissue>
    </source>
</reference>
<reference key="12">
    <citation type="journal article" date="2011" name="Physiol. Rev.">
        <title>Factor XIII: a coagulation factor with multiple plasmatic and cellular functions.</title>
        <authorList>
            <person name="Muszbek L."/>
            <person name="Bereczky Z."/>
            <person name="Bagoly Z."/>
            <person name="Komaromi I."/>
            <person name="Katona E."/>
        </authorList>
    </citation>
    <scope>REVIEW</scope>
</reference>
<reference key="13">
    <citation type="journal article" date="1993" name="Blood">
        <title>Two genetic defects in a patient with complete deficiency of the b-subunit for coagulation factor XIII.</title>
        <authorList>
            <person name="Hashiguchi T."/>
            <person name="Saito M."/>
            <person name="Morishita E."/>
            <person name="Matsuda T."/>
            <person name="Ichinose A."/>
        </authorList>
    </citation>
    <scope>VARIANT FA13BD PHE-450</scope>
</reference>
<reference key="14">
    <citation type="journal article" date="1999" name="Nat. Genet.">
        <title>Characterization of single-nucleotide polymorphisms in coding regions of human genes.</title>
        <authorList>
            <person name="Cargill M."/>
            <person name="Altshuler D."/>
            <person name="Ireland J."/>
            <person name="Sklar P."/>
            <person name="Ardlie K."/>
            <person name="Patil N."/>
            <person name="Shaw N."/>
            <person name="Lane C.R."/>
            <person name="Lim E.P."/>
            <person name="Kalyanaraman N."/>
            <person name="Nemesh J."/>
            <person name="Ziaugra L."/>
            <person name="Friedland L."/>
            <person name="Rolfe A."/>
            <person name="Warrington J."/>
            <person name="Lipshutz R."/>
            <person name="Daley G.Q."/>
            <person name="Lander E.S."/>
        </authorList>
    </citation>
    <scope>VARIANTS VAL-49; HIS-115; ARG-350; VAL-388; SER-543 AND GLU-569</scope>
</reference>
<reference key="15">
    <citation type="journal article" date="1999" name="Nat. Genet.">
        <authorList>
            <person name="Cargill M."/>
            <person name="Altshuler D."/>
            <person name="Ireland J."/>
            <person name="Sklar P."/>
            <person name="Ardlie K."/>
            <person name="Patil N."/>
            <person name="Shaw N."/>
            <person name="Lane C.R."/>
            <person name="Lim E.P."/>
            <person name="Kalyanaraman N."/>
            <person name="Nemesh J."/>
            <person name="Ziaugra L."/>
            <person name="Friedland L."/>
            <person name="Rolfe A."/>
            <person name="Warrington J."/>
            <person name="Lipshutz R."/>
            <person name="Daley G.Q."/>
            <person name="Lander E.S."/>
        </authorList>
    </citation>
    <scope>ERRATUM OF PUBMED:10391209</scope>
</reference>
<reference key="16">
    <citation type="journal article" date="2010" name="Haemophilia">
        <title>Mutations affecting disulphide bonds contribute to a fairly common prevalence of F13B gene defects: results of a genetic study in 14 families with factor XIII B deficiency.</title>
        <authorList>
            <person name="Ivaskevicius V."/>
            <person name="Biswas A."/>
            <person name="Loreth R."/>
            <person name="Schroeder V."/>
            <person name="Ohlenforst S."/>
            <person name="Rott H."/>
            <person name="Krause M."/>
            <person name="Kohler H.P."/>
            <person name="Scharrer I."/>
            <person name="Oldenburg J."/>
        </authorList>
    </citation>
    <scope>VARIANTS FA13BD ARG-25; ASN-101; PHE-136; ILE-237; PHE-336; GLU-421 AND SER-448</scope>
</reference>
<reference key="17">
    <citation type="journal article" date="2015" name="Mol. Genet. Genomic Med.">
        <title>Structural and functional influences of coagulation factor XIII subunit B heterozygous missense mutants.</title>
        <authorList>
            <person name="Thomas A."/>
            <person name="Biswas A."/>
            <person name="Ivaskevicius V."/>
            <person name="Oldenburg J."/>
        </authorList>
    </citation>
    <scope>CHARACTERIZATION OF VARIANTS FA13BD ARG-25; ASN-101; PHE-136; ILE-237; PHE-336; GLU-421 AND SER-448</scope>
    <scope>SUBCELLULAR LOCATION</scope>
    <scope>SUBUNIT</scope>
    <scope>INTERACTION WITH F13A1</scope>
</reference>
<proteinExistence type="evidence at protein level"/>
<organism>
    <name type="scientific">Homo sapiens</name>
    <name type="common">Human</name>
    <dbReference type="NCBI Taxonomy" id="9606"/>
    <lineage>
        <taxon>Eukaryota</taxon>
        <taxon>Metazoa</taxon>
        <taxon>Chordata</taxon>
        <taxon>Craniata</taxon>
        <taxon>Vertebrata</taxon>
        <taxon>Euteleostomi</taxon>
        <taxon>Mammalia</taxon>
        <taxon>Eutheria</taxon>
        <taxon>Euarchontoglires</taxon>
        <taxon>Primates</taxon>
        <taxon>Haplorrhini</taxon>
        <taxon>Catarrhini</taxon>
        <taxon>Hominidae</taxon>
        <taxon>Homo</taxon>
    </lineage>
</organism>
<feature type="signal peptide" evidence="10">
    <location>
        <begin position="1"/>
        <end position="20"/>
    </location>
</feature>
<feature type="chain" id="PRO_0000021222" description="Coagulation factor XIII B chain">
    <location>
        <begin position="21"/>
        <end position="661"/>
    </location>
</feature>
<feature type="domain" description="Sushi 1" evidence="1">
    <location>
        <begin position="24"/>
        <end position="88"/>
    </location>
</feature>
<feature type="domain" description="Sushi 2" evidence="1">
    <location>
        <begin position="89"/>
        <end position="148"/>
    </location>
</feature>
<feature type="domain" description="Sushi 3" evidence="1">
    <location>
        <begin position="151"/>
        <end position="210"/>
    </location>
</feature>
<feature type="domain" description="Sushi 4" evidence="1">
    <location>
        <begin position="211"/>
        <end position="269"/>
    </location>
</feature>
<feature type="domain" description="Sushi 5" evidence="1">
    <location>
        <begin position="272"/>
        <end position="329"/>
    </location>
</feature>
<feature type="domain" description="Sushi 6" evidence="1">
    <location>
        <begin position="334"/>
        <end position="391"/>
    </location>
</feature>
<feature type="domain" description="Sushi 7" evidence="1">
    <location>
        <begin position="394"/>
        <end position="452"/>
    </location>
</feature>
<feature type="domain" description="Sushi 8" evidence="1">
    <location>
        <begin position="453"/>
        <end position="516"/>
    </location>
</feature>
<feature type="domain" description="Sushi 9" evidence="1">
    <location>
        <begin position="522"/>
        <end position="580"/>
    </location>
</feature>
<feature type="domain" description="Sushi 10" evidence="1">
    <location>
        <begin position="581"/>
        <end position="647"/>
    </location>
</feature>
<feature type="short sequence motif" description="Cell attachment site">
    <location>
        <begin position="617"/>
        <end position="619"/>
    </location>
</feature>
<feature type="glycosylation site" description="N-linked (GlcNAc...) asparagine" evidence="6">
    <location>
        <position position="162"/>
    </location>
</feature>
<feature type="glycosylation site" description="N-linked (GlcNAc...) asparagine" evidence="5">
    <location>
        <position position="545"/>
    </location>
</feature>
<feature type="disulfide bond" evidence="1">
    <location>
        <begin position="25"/>
        <end position="76"/>
    </location>
</feature>
<feature type="disulfide bond" evidence="1">
    <location>
        <begin position="59"/>
        <end position="87"/>
    </location>
</feature>
<feature type="disulfide bond" evidence="1">
    <location>
        <begin position="91"/>
        <end position="135"/>
    </location>
</feature>
<feature type="disulfide bond" evidence="1">
    <location>
        <begin position="118"/>
        <end position="146"/>
    </location>
</feature>
<feature type="disulfide bond" evidence="1">
    <location>
        <begin position="153"/>
        <end position="197"/>
    </location>
</feature>
<feature type="disulfide bond" evidence="1">
    <location>
        <begin position="180"/>
        <end position="208"/>
    </location>
</feature>
<feature type="disulfide bond" evidence="1">
    <location>
        <begin position="213"/>
        <end position="255"/>
    </location>
</feature>
<feature type="disulfide bond" evidence="1">
    <location>
        <begin position="241"/>
        <end position="267"/>
    </location>
</feature>
<feature type="disulfide bond" evidence="1">
    <location>
        <begin position="274"/>
        <end position="316"/>
    </location>
</feature>
<feature type="disulfide bond" evidence="1">
    <location>
        <begin position="302"/>
        <end position="327"/>
    </location>
</feature>
<feature type="disulfide bond" evidence="1">
    <location>
        <begin position="336"/>
        <end position="378"/>
    </location>
</feature>
<feature type="disulfide bond" evidence="1">
    <location>
        <begin position="364"/>
        <end position="389"/>
    </location>
</feature>
<feature type="disulfide bond" evidence="1">
    <location>
        <begin position="396"/>
        <end position="439"/>
    </location>
</feature>
<feature type="disulfide bond" evidence="1">
    <location>
        <begin position="425"/>
        <end position="450"/>
    </location>
</feature>
<feature type="disulfide bond" evidence="1">
    <location>
        <begin position="454"/>
        <end position="505"/>
    </location>
</feature>
<feature type="disulfide bond" evidence="1">
    <location>
        <begin position="486"/>
        <end position="515"/>
    </location>
</feature>
<feature type="disulfide bond" evidence="1">
    <location>
        <begin position="524"/>
        <end position="567"/>
    </location>
</feature>
<feature type="disulfide bond" evidence="1">
    <location>
        <begin position="553"/>
        <end position="578"/>
    </location>
</feature>
<feature type="disulfide bond" evidence="1">
    <location>
        <begin position="582"/>
        <end position="636"/>
    </location>
</feature>
<feature type="disulfide bond" evidence="1">
    <location>
        <begin position="616"/>
        <end position="646"/>
    </location>
</feature>
<feature type="sequence variant" id="VAR_074563" description="In FA13BD; may disrupt a disulfide bond; impaired subcellular location leading to accumulation in the endoplasmic reticulum; impaired interaction with F13A1; impaired structure; dbSNP:rs1232302447." evidence="7 9">
    <original>C</original>
    <variation>R</variation>
    <location>
        <position position="25"/>
    </location>
</feature>
<feature type="sequence variant" id="VAR_013930" description="In dbSNP:rs6002." evidence="2">
    <original>M</original>
    <variation>V</variation>
    <location>
        <position position="49"/>
    </location>
</feature>
<feature type="sequence variant" id="VAR_074564" description="In FA13BD; impaired interaction with F13A1; dbSNP:rs753009140." evidence="7 9">
    <original>I</original>
    <variation>N</variation>
    <location>
        <position position="101"/>
    </location>
</feature>
<feature type="sequence variant" id="VAR_013931" description="In dbSNP:rs6003." evidence="2 8 10 13">
    <original>R</original>
    <variation>H</variation>
    <location>
        <position position="115"/>
    </location>
</feature>
<feature type="sequence variant" id="VAR_074565" description="In FA13BD; uncertain significance; dbSNP:rs757094432." evidence="7 9">
    <original>L</original>
    <variation>F</variation>
    <location>
        <position position="136"/>
    </location>
</feature>
<feature type="sequence variant" id="VAR_074566" description="In FA13BD; uncertain significance; dbSNP:rs145637157." evidence="7 9">
    <original>V</original>
    <variation>I</variation>
    <location>
        <position position="237"/>
    </location>
</feature>
<feature type="sequence variant" id="VAR_074567" description="In FA13BD; may disrupt a disulfide bond; impaired interaction with F13A1; impaired structure; dbSNP:rs778826479." evidence="7 9">
    <original>C</original>
    <variation>F</variation>
    <location>
        <position position="336"/>
    </location>
</feature>
<feature type="sequence variant" id="VAR_020612" description="In dbSNP:rs17514281." evidence="13">
    <original>I</original>
    <variation>T</variation>
    <location>
        <position position="342"/>
    </location>
</feature>
<feature type="sequence variant" id="VAR_013932" description="In dbSNP:rs5999." evidence="2 13">
    <original>H</original>
    <variation>R</variation>
    <location>
        <position position="350"/>
    </location>
</feature>
<feature type="sequence variant" id="VAR_013933" description="In dbSNP:rs5991." evidence="2">
    <original>E</original>
    <variation>V</variation>
    <location>
        <position position="388"/>
    </location>
</feature>
<feature type="sequence variant" id="VAR_074568" description="In FA13BD; impaired interaction with F13A1." evidence="7 9">
    <original>V</original>
    <variation>E</variation>
    <location>
        <position position="421"/>
    </location>
</feature>
<feature type="sequence variant" id="VAR_074569" description="In FA13BD; impaired interaction with F13A1; impaired structure." evidence="7 9">
    <original>P</original>
    <variation>S</variation>
    <location>
        <position position="448"/>
    </location>
</feature>
<feature type="sequence variant" id="VAR_007475" description="In FA13BD; dbSNP:rs121913075." evidence="12">
    <original>C</original>
    <variation>F</variation>
    <location>
        <position position="450"/>
    </location>
</feature>
<feature type="sequence variant" id="VAR_020613" description="In dbSNP:rs17549671." evidence="13">
    <original>L</original>
    <variation>P</variation>
    <location>
        <position position="529"/>
    </location>
</feature>
<feature type="sequence variant" id="VAR_013934" description="In dbSNP:rs6001." evidence="2">
    <original>Y</original>
    <variation>S</variation>
    <location>
        <position position="543"/>
    </location>
</feature>
<feature type="sequence variant" id="VAR_013935" description="In dbSNP:rs6000." evidence="2 4 13">
    <original>D</original>
    <variation>E</variation>
    <location>
        <position position="569"/>
    </location>
</feature>
<feature type="strand" evidence="17">
    <location>
        <begin position="31"/>
        <end position="35"/>
    </location>
</feature>
<feature type="helix" evidence="17">
    <location>
        <begin position="38"/>
        <end position="41"/>
    </location>
</feature>
<feature type="helix" evidence="17">
    <location>
        <begin position="43"/>
        <end position="46"/>
    </location>
</feature>
<feature type="strand" evidence="17">
    <location>
        <begin position="54"/>
        <end position="59"/>
    </location>
</feature>
<feature type="strand" evidence="17">
    <location>
        <begin position="70"/>
        <end position="77"/>
    </location>
</feature>
<feature type="strand" evidence="17">
    <location>
        <begin position="80"/>
        <end position="83"/>
    </location>
</feature>
<feature type="strand" evidence="17">
    <location>
        <begin position="98"/>
        <end position="102"/>
    </location>
</feature>
<feature type="strand" evidence="17">
    <location>
        <begin position="106"/>
        <end position="108"/>
    </location>
</feature>
<feature type="strand" evidence="17">
    <location>
        <begin position="113"/>
        <end position="118"/>
    </location>
</feature>
<feature type="strand" evidence="16">
    <location>
        <begin position="122"/>
        <end position="124"/>
    </location>
</feature>
<feature type="strand" evidence="17">
    <location>
        <begin position="127"/>
        <end position="135"/>
    </location>
</feature>
<feature type="strand" evidence="17">
    <location>
        <begin position="137"/>
        <end position="142"/>
    </location>
</feature>
<feature type="strand" evidence="16">
    <location>
        <begin position="146"/>
        <end position="148"/>
    </location>
</feature>
<feature type="strand" evidence="16">
    <location>
        <begin position="152"/>
        <end position="154"/>
    </location>
</feature>
<feature type="strand" evidence="16">
    <location>
        <begin position="161"/>
        <end position="166"/>
    </location>
</feature>
<feature type="strand" evidence="16">
    <location>
        <begin position="169"/>
        <end position="171"/>
    </location>
</feature>
<feature type="strand" evidence="16">
    <location>
        <begin position="175"/>
        <end position="180"/>
    </location>
</feature>
<feature type="strand" evidence="16">
    <location>
        <begin position="189"/>
        <end position="198"/>
    </location>
</feature>
<feature type="strand" evidence="16">
    <location>
        <begin position="201"/>
        <end position="204"/>
    </location>
</feature>
<feature type="strand" evidence="16">
    <location>
        <begin position="220"/>
        <end position="226"/>
    </location>
</feature>
<feature type="strand" evidence="16">
    <location>
        <begin position="229"/>
        <end position="231"/>
    </location>
</feature>
<feature type="strand" evidence="16">
    <location>
        <begin position="236"/>
        <end position="241"/>
    </location>
</feature>
<feature type="strand" evidence="16">
    <location>
        <begin position="246"/>
        <end position="249"/>
    </location>
</feature>
<feature type="strand" evidence="16">
    <location>
        <begin position="251"/>
        <end position="256"/>
    </location>
</feature>
<feature type="strand" evidence="16">
    <location>
        <begin position="259"/>
        <end position="262"/>
    </location>
</feature>
<feature type="strand" evidence="16">
    <location>
        <begin position="266"/>
        <end position="270"/>
    </location>
</feature>
<feature type="strand" evidence="16">
    <location>
        <begin position="283"/>
        <end position="286"/>
    </location>
</feature>
<feature type="strand" evidence="16">
    <location>
        <begin position="297"/>
        <end position="302"/>
    </location>
</feature>
<feature type="strand" evidence="16">
    <location>
        <begin position="306"/>
        <end position="310"/>
    </location>
</feature>
<feature type="strand" evidence="16">
    <location>
        <begin position="312"/>
        <end position="317"/>
    </location>
</feature>
<feature type="strand" evidence="16">
    <location>
        <begin position="326"/>
        <end position="329"/>
    </location>
</feature>
<gene>
    <name type="primary">F13B</name>
</gene>
<evidence type="ECO:0000255" key="1">
    <source>
        <dbReference type="PROSITE-ProRule" id="PRU00302"/>
    </source>
</evidence>
<evidence type="ECO:0000269" key="2">
    <source>
    </source>
</evidence>
<evidence type="ECO:0000269" key="3">
    <source>
    </source>
</evidence>
<evidence type="ECO:0000269" key="4">
    <source>
    </source>
</evidence>
<evidence type="ECO:0000269" key="5">
    <source>
    </source>
</evidence>
<evidence type="ECO:0000269" key="6">
    <source>
    </source>
</evidence>
<evidence type="ECO:0000269" key="7">
    <source>
    </source>
</evidence>
<evidence type="ECO:0000269" key="8">
    <source>
    </source>
</evidence>
<evidence type="ECO:0000269" key="9">
    <source>
    </source>
</evidence>
<evidence type="ECO:0000269" key="10">
    <source>
    </source>
</evidence>
<evidence type="ECO:0000269" key="11">
    <source>
    </source>
</evidence>
<evidence type="ECO:0000269" key="12">
    <source>
    </source>
</evidence>
<evidence type="ECO:0000269" key="13">
    <source ref="5"/>
</evidence>
<evidence type="ECO:0000303" key="14">
    <source>
    </source>
</evidence>
<evidence type="ECO:0000303" key="15">
    <source>
    </source>
</evidence>
<evidence type="ECO:0007829" key="16">
    <source>
        <dbReference type="PDB" id="8CMT"/>
    </source>
</evidence>
<evidence type="ECO:0007829" key="17">
    <source>
        <dbReference type="PDB" id="8CMU"/>
    </source>
</evidence>
<comment type="function">
    <text evidence="14 15">The B chain of factor XIII is not catalytically active, but is thought to stabilize the A subunits and regulate the rate of transglutaminase formation by thrombin.</text>
</comment>
<comment type="subunit">
    <text evidence="9 11">Tetramer of two A chains (F13A1) and two B (F13B) chains.</text>
</comment>
<comment type="subcellular location">
    <subcellularLocation>
        <location evidence="9 11">Secreted</location>
    </subcellularLocation>
</comment>
<comment type="disease" evidence="3 7 9 12">
    <disease id="DI-02829">
        <name>Factor XIII subunit B deficiency</name>
        <acronym>FA13BD</acronym>
        <description>An autosomal recessive hematologic disorder characterized by a life-long bleeding tendency, impaired wound healing and spontaneous abortion in affected women.</description>
        <dbReference type="MIM" id="613235"/>
    </disease>
    <text>The disease is caused by variants affecting the gene represented in this entry.</text>
</comment>
<comment type="online information" name="Wikipedia">
    <link uri="https://en.wikipedia.org/wiki/Factor_XIII"/>
    <text>Factor XIII entry</text>
</comment>
<keyword id="KW-0002">3D-structure</keyword>
<keyword id="KW-0094">Blood coagulation</keyword>
<keyword id="KW-0903">Direct protein sequencing</keyword>
<keyword id="KW-0225">Disease variant</keyword>
<keyword id="KW-1015">Disulfide bond</keyword>
<keyword id="KW-0325">Glycoprotein</keyword>
<keyword id="KW-0356">Hemostasis</keyword>
<keyword id="KW-1267">Proteomics identification</keyword>
<keyword id="KW-1185">Reference proteome</keyword>
<keyword id="KW-0677">Repeat</keyword>
<keyword id="KW-0964">Secreted</keyword>
<keyword id="KW-0732">Signal</keyword>
<keyword id="KW-0768">Sushi</keyword>
<dbReference type="EMBL" id="M64554">
    <property type="protein sequence ID" value="AAA51821.1"/>
    <property type="molecule type" value="Genomic_DNA"/>
</dbReference>
<dbReference type="EMBL" id="M14057">
    <property type="protein sequence ID" value="AAA88042.1"/>
    <property type="molecule type" value="mRNA"/>
</dbReference>
<dbReference type="EMBL" id="AK290560">
    <property type="protein sequence ID" value="BAF83249.1"/>
    <property type="molecule type" value="mRNA"/>
</dbReference>
<dbReference type="EMBL" id="AY692223">
    <property type="protein sequence ID" value="AAT85802.1"/>
    <property type="molecule type" value="Genomic_DNA"/>
</dbReference>
<dbReference type="EMBL" id="AL353809">
    <property type="status" value="NOT_ANNOTATED_CDS"/>
    <property type="molecule type" value="Genomic_DNA"/>
</dbReference>
<dbReference type="EMBL" id="X51823">
    <property type="protein sequence ID" value="CAA36123.1"/>
    <property type="molecule type" value="mRNA"/>
</dbReference>
<dbReference type="CCDS" id="CCDS1388.1"/>
<dbReference type="PIR" id="A36397">
    <property type="entry name" value="KFHU13"/>
</dbReference>
<dbReference type="RefSeq" id="NP_001985.2">
    <property type="nucleotide sequence ID" value="NM_001994.3"/>
</dbReference>
<dbReference type="PDB" id="8CMT">
    <property type="method" value="EM"/>
    <property type="resolution" value="3.04 A"/>
    <property type="chains" value="C/D=1-661"/>
</dbReference>
<dbReference type="PDB" id="8CMU">
    <property type="method" value="EM"/>
    <property type="resolution" value="2.41 A"/>
    <property type="chains" value="C/D=1-661"/>
</dbReference>
<dbReference type="PDBsum" id="8CMT"/>
<dbReference type="PDBsum" id="8CMU"/>
<dbReference type="EMDB" id="EMD-16745"/>
<dbReference type="EMDB" id="EMD-16746"/>
<dbReference type="SMR" id="P05160"/>
<dbReference type="BioGRID" id="108463">
    <property type="interactions" value="2"/>
</dbReference>
<dbReference type="ComplexPortal" id="CPX-6231">
    <property type="entry name" value="Coagulation factor XIIIa complex"/>
</dbReference>
<dbReference type="FunCoup" id="P05160">
    <property type="interactions" value="92"/>
</dbReference>
<dbReference type="IntAct" id="P05160">
    <property type="interactions" value="11"/>
</dbReference>
<dbReference type="STRING" id="9606.ENSP00000356382"/>
<dbReference type="BindingDB" id="P05160"/>
<dbReference type="ChEMBL" id="CHEMBL3351193"/>
<dbReference type="DrugBank" id="DB09310">
    <property type="generic name" value="Catridecacog"/>
</dbReference>
<dbReference type="DrugBank" id="DB11571">
    <property type="generic name" value="Human thrombin"/>
</dbReference>
<dbReference type="DrugBank" id="DB11300">
    <property type="generic name" value="Thrombin"/>
</dbReference>
<dbReference type="DrugBank" id="DB01593">
    <property type="generic name" value="Zinc"/>
</dbReference>
<dbReference type="DrugBank" id="DB14487">
    <property type="generic name" value="Zinc acetate"/>
</dbReference>
<dbReference type="GlyConnect" id="1122">
    <property type="glycosylation" value="8 N-Linked glycans (2 sites)"/>
</dbReference>
<dbReference type="GlyCosmos" id="P05160">
    <property type="glycosylation" value="3 sites, 14 glycans"/>
</dbReference>
<dbReference type="GlyGen" id="P05160">
    <property type="glycosylation" value="6 sites, 26 N-linked glycans (2 sites), 3 O-linked glycans (4 sites)"/>
</dbReference>
<dbReference type="iPTMnet" id="P05160"/>
<dbReference type="PhosphoSitePlus" id="P05160"/>
<dbReference type="BioMuta" id="F13B"/>
<dbReference type="DMDM" id="145559473"/>
<dbReference type="MassIVE" id="P05160"/>
<dbReference type="PaxDb" id="9606-ENSP00000356382"/>
<dbReference type="PeptideAtlas" id="P05160"/>
<dbReference type="ProteomicsDB" id="51808"/>
<dbReference type="Antibodypedia" id="868">
    <property type="antibodies" value="237 antibodies from 25 providers"/>
</dbReference>
<dbReference type="DNASU" id="2165"/>
<dbReference type="Ensembl" id="ENST00000367412.2">
    <property type="protein sequence ID" value="ENSP00000356382.2"/>
    <property type="gene ID" value="ENSG00000143278.5"/>
</dbReference>
<dbReference type="Ensembl" id="ENST00000709526.1">
    <property type="protein sequence ID" value="ENSP00000517743.1"/>
    <property type="gene ID" value="ENSG00000291998.1"/>
</dbReference>
<dbReference type="GeneID" id="2165"/>
<dbReference type="KEGG" id="hsa:2165"/>
<dbReference type="MANE-Select" id="ENST00000367412.2">
    <property type="protein sequence ID" value="ENSP00000356382.2"/>
    <property type="RefSeq nucleotide sequence ID" value="NM_001994.3"/>
    <property type="RefSeq protein sequence ID" value="NP_001985.2"/>
</dbReference>
<dbReference type="UCSC" id="uc001gtt.1">
    <property type="organism name" value="human"/>
</dbReference>
<dbReference type="AGR" id="HGNC:3534"/>
<dbReference type="CTD" id="2165"/>
<dbReference type="DisGeNET" id="2165"/>
<dbReference type="GeneCards" id="F13B"/>
<dbReference type="HGNC" id="HGNC:3534">
    <property type="gene designation" value="F13B"/>
</dbReference>
<dbReference type="HPA" id="ENSG00000143278">
    <property type="expression patterns" value="Tissue enriched (liver)"/>
</dbReference>
<dbReference type="MalaCards" id="F13B"/>
<dbReference type="MIM" id="134580">
    <property type="type" value="gene+phenotype"/>
</dbReference>
<dbReference type="MIM" id="613235">
    <property type="type" value="phenotype"/>
</dbReference>
<dbReference type="neXtProt" id="NX_P05160"/>
<dbReference type="OpenTargets" id="ENSG00000143278"/>
<dbReference type="Orphanet" id="331">
    <property type="disease" value="Congenital factor XIII deficiency"/>
</dbReference>
<dbReference type="PharmGKB" id="PA27944"/>
<dbReference type="VEuPathDB" id="HostDB:ENSG00000143278"/>
<dbReference type="eggNOG" id="ENOG502RDCS">
    <property type="taxonomic scope" value="Eukaryota"/>
</dbReference>
<dbReference type="GeneTree" id="ENSGT00940000154967"/>
<dbReference type="HOGENOM" id="CLU_020107_6_0_1"/>
<dbReference type="InParanoid" id="P05160"/>
<dbReference type="OMA" id="YTFKSFY"/>
<dbReference type="OrthoDB" id="9984531at2759"/>
<dbReference type="PAN-GO" id="P05160">
    <property type="GO annotations" value="1 GO annotation based on evolutionary models"/>
</dbReference>
<dbReference type="PhylomeDB" id="P05160"/>
<dbReference type="TreeFam" id="TF326157"/>
<dbReference type="BioCyc" id="MetaCyc:ENSG00000143278-MONOMER"/>
<dbReference type="PathwayCommons" id="P05160"/>
<dbReference type="Reactome" id="R-HSA-140875">
    <property type="pathway name" value="Common Pathway of Fibrin Clot Formation"/>
</dbReference>
<dbReference type="SignaLink" id="P05160"/>
<dbReference type="BioGRID-ORCS" id="2165">
    <property type="hits" value="7 hits in 1138 CRISPR screens"/>
</dbReference>
<dbReference type="GeneWiki" id="F13B"/>
<dbReference type="GenomeRNAi" id="2165"/>
<dbReference type="Pharos" id="P05160">
    <property type="development level" value="Tbio"/>
</dbReference>
<dbReference type="PRO" id="PR:P05160"/>
<dbReference type="Proteomes" id="UP000005640">
    <property type="component" value="Chromosome 1"/>
</dbReference>
<dbReference type="RNAct" id="P05160">
    <property type="molecule type" value="protein"/>
</dbReference>
<dbReference type="Bgee" id="ENSG00000143278">
    <property type="expression patterns" value="Expressed in right lobe of liver and 33 other cell types or tissues"/>
</dbReference>
<dbReference type="ExpressionAtlas" id="P05160">
    <property type="expression patterns" value="baseline and differential"/>
</dbReference>
<dbReference type="GO" id="GO:0005576">
    <property type="term" value="C:extracellular region"/>
    <property type="evidence" value="ECO:0000304"/>
    <property type="project" value="Reactome"/>
</dbReference>
<dbReference type="GO" id="GO:0005615">
    <property type="term" value="C:extracellular space"/>
    <property type="evidence" value="ECO:0000303"/>
    <property type="project" value="ComplexPortal"/>
</dbReference>
<dbReference type="GO" id="GO:1990234">
    <property type="term" value="C:transferase complex"/>
    <property type="evidence" value="ECO:0000303"/>
    <property type="project" value="ComplexPortal"/>
</dbReference>
<dbReference type="GO" id="GO:0007596">
    <property type="term" value="P:blood coagulation"/>
    <property type="evidence" value="ECO:0000318"/>
    <property type="project" value="GO_Central"/>
</dbReference>
<dbReference type="GO" id="GO:0072378">
    <property type="term" value="P:blood coagulation, fibrin clot formation"/>
    <property type="evidence" value="ECO:0000314"/>
    <property type="project" value="ComplexPortal"/>
</dbReference>
<dbReference type="CDD" id="cd00033">
    <property type="entry name" value="CCP"/>
    <property type="match status" value="7"/>
</dbReference>
<dbReference type="FunFam" id="2.10.70.10:FF:000065">
    <property type="entry name" value="Coagulation factor XIII B chain"/>
    <property type="match status" value="1"/>
</dbReference>
<dbReference type="FunFam" id="2.10.70.10:FF:000103">
    <property type="entry name" value="Coagulation factor XIII B chain"/>
    <property type="match status" value="1"/>
</dbReference>
<dbReference type="FunFam" id="2.10.70.10:FF:000108">
    <property type="entry name" value="Coagulation factor XIII B chain"/>
    <property type="match status" value="1"/>
</dbReference>
<dbReference type="FunFam" id="2.10.70.10:FF:000109">
    <property type="entry name" value="Coagulation factor XIII B chain"/>
    <property type="match status" value="1"/>
</dbReference>
<dbReference type="FunFam" id="2.10.70.10:FF:000111">
    <property type="entry name" value="Coagulation factor XIII B chain"/>
    <property type="match status" value="1"/>
</dbReference>
<dbReference type="FunFam" id="2.10.70.10:FF:000120">
    <property type="entry name" value="Coagulation factor XIII B chain"/>
    <property type="match status" value="1"/>
</dbReference>
<dbReference type="FunFam" id="2.10.70.10:FF:000123">
    <property type="entry name" value="Coagulation factor XIII B chain"/>
    <property type="match status" value="1"/>
</dbReference>
<dbReference type="FunFam" id="2.10.70.10:FF:000142">
    <property type="entry name" value="Coagulation factor XIII B chain"/>
    <property type="match status" value="1"/>
</dbReference>
<dbReference type="FunFam" id="2.10.70.10:FF:000054">
    <property type="entry name" value="Complement inhibitory factor H"/>
    <property type="match status" value="1"/>
</dbReference>
<dbReference type="FunFam" id="2.10.70.10:FF:000060">
    <property type="entry name" value="Complement inhibitory factor H"/>
    <property type="match status" value="1"/>
</dbReference>
<dbReference type="Gene3D" id="2.10.70.10">
    <property type="entry name" value="Complement Module, domain 1"/>
    <property type="match status" value="10"/>
</dbReference>
<dbReference type="InterPro" id="IPR051503">
    <property type="entry name" value="ComplSys_Reg/VirEntry_Med"/>
</dbReference>
<dbReference type="InterPro" id="IPR035976">
    <property type="entry name" value="Sushi/SCR/CCP_sf"/>
</dbReference>
<dbReference type="InterPro" id="IPR000436">
    <property type="entry name" value="Sushi_SCR_CCP_dom"/>
</dbReference>
<dbReference type="PANTHER" id="PTHR45785:SF3">
    <property type="entry name" value="COAGULATION FACTOR XIII B CHAIN"/>
    <property type="match status" value="1"/>
</dbReference>
<dbReference type="PANTHER" id="PTHR45785">
    <property type="entry name" value="COMPLEMENT FACTOR H-RELATED"/>
    <property type="match status" value="1"/>
</dbReference>
<dbReference type="Pfam" id="PF00084">
    <property type="entry name" value="Sushi"/>
    <property type="match status" value="8"/>
</dbReference>
<dbReference type="SMART" id="SM00032">
    <property type="entry name" value="CCP"/>
    <property type="match status" value="8"/>
</dbReference>
<dbReference type="SUPFAM" id="SSF57535">
    <property type="entry name" value="Complement control module/SCR domain"/>
    <property type="match status" value="10"/>
</dbReference>
<dbReference type="PROSITE" id="PS50923">
    <property type="entry name" value="SUSHI"/>
    <property type="match status" value="7"/>
</dbReference>
<sequence>MRLKNLTFIIILIISGELYAEEKPCGFPHVENGRIAQYYYTFKSFYFPMSIDKKLSFFCLAGYTTESGRQEEQTTCTTEGWSPEPRCFKKCTKPDLSNGYISDVKLLYKIQENMRYGCASGYKTTGGKDEEVVQCLSDGWSSQPTCRKEHETCLAPELYNGNYSTTQKTFKVKDKVQYECATGYYTAGGKKTEEVECLTYGWSLTPKCTKLKCSSLRLIENGYFHPVKQTYEEGDVVQFFCHENYYLSGSDLIQCYNFGWYPESPVCEGRRNRCPPPPLPINSKIQTHSTTYRHGEIVHIECELNFEIHGSAEIRCEDGKWTEPPKCIEGQEKVACEEPPFIENGAANLHSKIYYNGDKVTYACKSGYLLHGSNEITCNRGKWTLPPECVENNENCKHPPVVMNGAVADGILASYATGSSVEYRCNEYYLLRGSKISRCEQGKWSSPPVCLEPCTVNVDYMNRNNIEMKWKYEGKVLHGDLIDFVCKQGYDLSPLTPLSELSVQCNRGEVKYPLCTRKESKGMCTSPPLIKHGVIISSTVDTYENGSSVEYRCFDHHFLEGSREAYCLDGMWTTPPLCLEPCTLSFTEMEKNNLLLKWDFDNRPHILHGEYIEFICRGDTYPAELYITGSILRMQCDRGQLKYPRCIPRQSTLSYQEPLRT</sequence>
<protein>
    <recommendedName>
        <fullName>Coagulation factor XIII B chain</fullName>
    </recommendedName>
    <alternativeName>
        <fullName>Fibrin-stabilizing factor B subunit</fullName>
    </alternativeName>
    <alternativeName>
        <fullName>Protein-glutamine gamma-glutamyltransferase B chain</fullName>
    </alternativeName>
    <alternativeName>
        <fullName>Transglutaminase B chain</fullName>
    </alternativeName>
</protein>